<sequence>MFLGTHHPKLDDKGRLTLPAKFREALAGGLMVTKGQDHCLYVFPRAEFEQMARKVAEAPFTNESVRAYQRYLFAGTDEQQPDGQGRISIAAELRRYAGLTKECVVIGAINRLEIWNAERWQTYLDEHEEDYAQAREEVLPGVF</sequence>
<proteinExistence type="inferred from homology"/>
<accession>A4FLX6</accession>
<protein>
    <recommendedName>
        <fullName>Transcriptional regulator MraZ</fullName>
    </recommendedName>
</protein>
<comment type="subunit">
    <text evidence="1">Forms oligomers.</text>
</comment>
<comment type="subcellular location">
    <subcellularLocation>
        <location evidence="1">Cytoplasm</location>
        <location evidence="1">Nucleoid</location>
    </subcellularLocation>
</comment>
<comment type="similarity">
    <text evidence="1">Belongs to the MraZ family.</text>
</comment>
<keyword id="KW-0963">Cytoplasm</keyword>
<keyword id="KW-0238">DNA-binding</keyword>
<keyword id="KW-1185">Reference proteome</keyword>
<keyword id="KW-0677">Repeat</keyword>
<keyword id="KW-0804">Transcription</keyword>
<keyword id="KW-0805">Transcription regulation</keyword>
<gene>
    <name evidence="1" type="primary">mraZ</name>
    <name type="ordered locus">SACE_5867</name>
</gene>
<reference key="1">
    <citation type="journal article" date="2007" name="Nat. Biotechnol.">
        <title>Complete genome sequence of the erythromycin-producing bacterium Saccharopolyspora erythraea NRRL23338.</title>
        <authorList>
            <person name="Oliynyk M."/>
            <person name="Samborskyy M."/>
            <person name="Lester J.B."/>
            <person name="Mironenko T."/>
            <person name="Scott N."/>
            <person name="Dickens S."/>
            <person name="Haydock S.F."/>
            <person name="Leadlay P.F."/>
        </authorList>
    </citation>
    <scope>NUCLEOTIDE SEQUENCE [LARGE SCALE GENOMIC DNA]</scope>
    <source>
        <strain>ATCC 11635 / DSM 40517 / JCM 4748 / NBRC 13426 / NCIMB 8594 / NRRL 2338</strain>
    </source>
</reference>
<evidence type="ECO:0000255" key="1">
    <source>
        <dbReference type="HAMAP-Rule" id="MF_01008"/>
    </source>
</evidence>
<evidence type="ECO:0000255" key="2">
    <source>
        <dbReference type="PROSITE-ProRule" id="PRU01076"/>
    </source>
</evidence>
<feature type="chain" id="PRO_1000062926" description="Transcriptional regulator MraZ">
    <location>
        <begin position="1"/>
        <end position="143"/>
    </location>
</feature>
<feature type="domain" description="SpoVT-AbrB 1" evidence="2">
    <location>
        <begin position="5"/>
        <end position="47"/>
    </location>
</feature>
<feature type="domain" description="SpoVT-AbrB 2" evidence="2">
    <location>
        <begin position="76"/>
        <end position="119"/>
    </location>
</feature>
<name>MRAZ_SACEN</name>
<dbReference type="EMBL" id="AM420293">
    <property type="protein sequence ID" value="CAM05051.1"/>
    <property type="molecule type" value="Genomic_DNA"/>
</dbReference>
<dbReference type="RefSeq" id="WP_009943116.1">
    <property type="nucleotide sequence ID" value="NC_009142.1"/>
</dbReference>
<dbReference type="SMR" id="A4FLX6"/>
<dbReference type="STRING" id="405948.SACE_5867"/>
<dbReference type="KEGG" id="sen:SACE_5867"/>
<dbReference type="eggNOG" id="COG2001">
    <property type="taxonomic scope" value="Bacteria"/>
</dbReference>
<dbReference type="HOGENOM" id="CLU_107907_0_5_11"/>
<dbReference type="OrthoDB" id="9807753at2"/>
<dbReference type="Proteomes" id="UP000006728">
    <property type="component" value="Chromosome"/>
</dbReference>
<dbReference type="GO" id="GO:0005737">
    <property type="term" value="C:cytoplasm"/>
    <property type="evidence" value="ECO:0007669"/>
    <property type="project" value="UniProtKB-UniRule"/>
</dbReference>
<dbReference type="GO" id="GO:0009295">
    <property type="term" value="C:nucleoid"/>
    <property type="evidence" value="ECO:0007669"/>
    <property type="project" value="UniProtKB-SubCell"/>
</dbReference>
<dbReference type="GO" id="GO:0003700">
    <property type="term" value="F:DNA-binding transcription factor activity"/>
    <property type="evidence" value="ECO:0007669"/>
    <property type="project" value="UniProtKB-UniRule"/>
</dbReference>
<dbReference type="GO" id="GO:0000976">
    <property type="term" value="F:transcription cis-regulatory region binding"/>
    <property type="evidence" value="ECO:0007669"/>
    <property type="project" value="TreeGrafter"/>
</dbReference>
<dbReference type="GO" id="GO:2000143">
    <property type="term" value="P:negative regulation of DNA-templated transcription initiation"/>
    <property type="evidence" value="ECO:0007669"/>
    <property type="project" value="TreeGrafter"/>
</dbReference>
<dbReference type="CDD" id="cd16321">
    <property type="entry name" value="MraZ_C"/>
    <property type="match status" value="1"/>
</dbReference>
<dbReference type="CDD" id="cd16320">
    <property type="entry name" value="MraZ_N"/>
    <property type="match status" value="1"/>
</dbReference>
<dbReference type="Gene3D" id="3.40.1550.20">
    <property type="entry name" value="Transcriptional regulator MraZ domain"/>
    <property type="match status" value="1"/>
</dbReference>
<dbReference type="HAMAP" id="MF_01008">
    <property type="entry name" value="MraZ"/>
    <property type="match status" value="1"/>
</dbReference>
<dbReference type="InterPro" id="IPR003444">
    <property type="entry name" value="MraZ"/>
</dbReference>
<dbReference type="InterPro" id="IPR035644">
    <property type="entry name" value="MraZ_C"/>
</dbReference>
<dbReference type="InterPro" id="IPR020603">
    <property type="entry name" value="MraZ_dom"/>
</dbReference>
<dbReference type="InterPro" id="IPR035642">
    <property type="entry name" value="MraZ_N"/>
</dbReference>
<dbReference type="InterPro" id="IPR038619">
    <property type="entry name" value="MraZ_sf"/>
</dbReference>
<dbReference type="InterPro" id="IPR007159">
    <property type="entry name" value="SpoVT-AbrB_dom"/>
</dbReference>
<dbReference type="InterPro" id="IPR037914">
    <property type="entry name" value="SpoVT-AbrB_sf"/>
</dbReference>
<dbReference type="NCBIfam" id="TIGR00242">
    <property type="entry name" value="division/cell wall cluster transcriptional repressor MraZ"/>
    <property type="match status" value="1"/>
</dbReference>
<dbReference type="PANTHER" id="PTHR34701">
    <property type="entry name" value="TRANSCRIPTIONAL REGULATOR MRAZ"/>
    <property type="match status" value="1"/>
</dbReference>
<dbReference type="PANTHER" id="PTHR34701:SF1">
    <property type="entry name" value="TRANSCRIPTIONAL REGULATOR MRAZ"/>
    <property type="match status" value="1"/>
</dbReference>
<dbReference type="Pfam" id="PF02381">
    <property type="entry name" value="MraZ"/>
    <property type="match status" value="2"/>
</dbReference>
<dbReference type="SUPFAM" id="SSF89447">
    <property type="entry name" value="AbrB/MazE/MraZ-like"/>
    <property type="match status" value="1"/>
</dbReference>
<dbReference type="PROSITE" id="PS51740">
    <property type="entry name" value="SPOVT_ABRB"/>
    <property type="match status" value="2"/>
</dbReference>
<organism>
    <name type="scientific">Saccharopolyspora erythraea (strain ATCC 11635 / DSM 40517 / JCM 4748 / NBRC 13426 / NCIMB 8594 / NRRL 2338)</name>
    <dbReference type="NCBI Taxonomy" id="405948"/>
    <lineage>
        <taxon>Bacteria</taxon>
        <taxon>Bacillati</taxon>
        <taxon>Actinomycetota</taxon>
        <taxon>Actinomycetes</taxon>
        <taxon>Pseudonocardiales</taxon>
        <taxon>Pseudonocardiaceae</taxon>
        <taxon>Saccharopolyspora</taxon>
    </lineage>
</organism>